<organism>
    <name type="scientific">Streptococcus equi subsp. zooepidemicus (strain MGCS10565)</name>
    <dbReference type="NCBI Taxonomy" id="552526"/>
    <lineage>
        <taxon>Bacteria</taxon>
        <taxon>Bacillati</taxon>
        <taxon>Bacillota</taxon>
        <taxon>Bacilli</taxon>
        <taxon>Lactobacillales</taxon>
        <taxon>Streptococcaceae</taxon>
        <taxon>Streptococcus</taxon>
    </lineage>
</organism>
<evidence type="ECO:0000255" key="1">
    <source>
        <dbReference type="HAMAP-Rule" id="MF_01249"/>
    </source>
</evidence>
<keyword id="KW-0067">ATP-binding</keyword>
<keyword id="KW-0119">Carbohydrate metabolism</keyword>
<keyword id="KW-0418">Kinase</keyword>
<keyword id="KW-0460">Magnesium</keyword>
<keyword id="KW-0479">Metal-binding</keyword>
<keyword id="KW-0511">Multifunctional enzyme</keyword>
<keyword id="KW-0547">Nucleotide-binding</keyword>
<keyword id="KW-0723">Serine/threonine-protein kinase</keyword>
<keyword id="KW-0808">Transferase</keyword>
<name>HPRK_STREM</name>
<gene>
    <name evidence="1" type="primary">hprK</name>
    <name type="ordered locus">Sez_1358</name>
</gene>
<protein>
    <recommendedName>
        <fullName evidence="1">HPr kinase/phosphorylase</fullName>
        <shortName evidence="1">HPrK/P</shortName>
        <ecNumber evidence="1">2.7.11.-</ecNumber>
        <ecNumber evidence="1">2.7.4.-</ecNumber>
    </recommendedName>
    <alternativeName>
        <fullName evidence="1">HPr(Ser) kinase/phosphorylase</fullName>
    </alternativeName>
</protein>
<sequence>MTVTVKMLVTKVKLDVVYATDDLLEKEITTSDISRPGLEMTGYFDYYAPERLQLFGMKEWSYLTQMTSHNRYSVLKEMFKKDTPAVIVSRGLAIPEEMVQAAQEEGIALFSSRVSTSRLAGEMSYFLDASLAERTSVHGVLMDIYGMGVLIQGDSGIGKSETGLELVKRGHRLVADDRVDVFAKDEETLWGEPAEILRHLLEIRGVGIIDVMSLYGASAVKDSSQVQLAIYLENFEAGKVFDRLGNGNEEITFSGVSIPRIRIPVKTGRNVSVVIEAAAMNHRAKEMGFDATKTFEERLTRLISKNEEGK</sequence>
<reference key="1">
    <citation type="journal article" date="2008" name="PLoS ONE">
        <title>Genome sequence of a lancefield group C Streptococcus zooepidemicus strain causing epidemic nephritis: new information about an old disease.</title>
        <authorList>
            <person name="Beres S.B."/>
            <person name="Sesso R."/>
            <person name="Pinto S.W.L."/>
            <person name="Hoe N.P."/>
            <person name="Porcella S.F."/>
            <person name="Deleo F.R."/>
            <person name="Musser J.M."/>
        </authorList>
    </citation>
    <scope>NUCLEOTIDE SEQUENCE [LARGE SCALE GENOMIC DNA]</scope>
    <source>
        <strain>MGCS10565</strain>
    </source>
</reference>
<proteinExistence type="inferred from homology"/>
<feature type="chain" id="PRO_1000139910" description="HPr kinase/phosphorylase">
    <location>
        <begin position="1"/>
        <end position="310"/>
    </location>
</feature>
<feature type="region of interest" description="Important for the catalytic mechanism of both phosphorylation and dephosphorylation" evidence="1">
    <location>
        <begin position="201"/>
        <end position="210"/>
    </location>
</feature>
<feature type="region of interest" description="Important for the catalytic mechanism of dephosphorylation" evidence="1">
    <location>
        <begin position="264"/>
        <end position="269"/>
    </location>
</feature>
<feature type="active site" evidence="1">
    <location>
        <position position="138"/>
    </location>
</feature>
<feature type="active site" evidence="1">
    <location>
        <position position="159"/>
    </location>
</feature>
<feature type="active site" description="Proton acceptor; for phosphorylation activity. Proton donor; for dephosphorylation activity" evidence="1">
    <location>
        <position position="177"/>
    </location>
</feature>
<feature type="active site" evidence="1">
    <location>
        <position position="243"/>
    </location>
</feature>
<feature type="binding site" evidence="1">
    <location>
        <begin position="153"/>
        <end position="160"/>
    </location>
    <ligand>
        <name>ATP</name>
        <dbReference type="ChEBI" id="CHEBI:30616"/>
    </ligand>
</feature>
<feature type="binding site" evidence="1">
    <location>
        <position position="160"/>
    </location>
    <ligand>
        <name>Mg(2+)</name>
        <dbReference type="ChEBI" id="CHEBI:18420"/>
    </ligand>
</feature>
<feature type="binding site" evidence="1">
    <location>
        <position position="202"/>
    </location>
    <ligand>
        <name>Mg(2+)</name>
        <dbReference type="ChEBI" id="CHEBI:18420"/>
    </ligand>
</feature>
<comment type="function">
    <text evidence="1">Catalyzes the ATP- as well as the pyrophosphate-dependent phosphorylation of a specific serine residue in HPr, a phosphocarrier protein of the phosphoenolpyruvate-dependent sugar phosphotransferase system (PTS). HprK/P also catalyzes the pyrophosphate-producing, inorganic phosphate-dependent dephosphorylation (phosphorolysis) of seryl-phosphorylated HPr (P-Ser-HPr). The two antagonistic activities of HprK/P are regulated by several intracellular metabolites, which change their concentration in response to the absence or presence of rapidly metabolisable carbon sources (glucose, fructose, etc.) in the growth medium. Therefore, by controlling the phosphorylation state of HPr, HPrK/P is a sensor enzyme that plays a major role in the regulation of carbon metabolism and sugar transport: it mediates carbon catabolite repression (CCR), and regulates PTS-catalyzed carbohydrate uptake and inducer exclusion.</text>
</comment>
<comment type="catalytic activity">
    <reaction evidence="1">
        <text>[HPr protein]-L-serine + ATP = [HPr protein]-O-phospho-L-serine + ADP + H(+)</text>
        <dbReference type="Rhea" id="RHEA:46600"/>
        <dbReference type="Rhea" id="RHEA-COMP:11602"/>
        <dbReference type="Rhea" id="RHEA-COMP:11603"/>
        <dbReference type="ChEBI" id="CHEBI:15378"/>
        <dbReference type="ChEBI" id="CHEBI:29999"/>
        <dbReference type="ChEBI" id="CHEBI:30616"/>
        <dbReference type="ChEBI" id="CHEBI:83421"/>
        <dbReference type="ChEBI" id="CHEBI:456216"/>
    </reaction>
</comment>
<comment type="catalytic activity">
    <reaction evidence="1">
        <text>[HPr protein]-O-phospho-L-serine + phosphate + H(+) = [HPr protein]-L-serine + diphosphate</text>
        <dbReference type="Rhea" id="RHEA:46604"/>
        <dbReference type="Rhea" id="RHEA-COMP:11602"/>
        <dbReference type="Rhea" id="RHEA-COMP:11603"/>
        <dbReference type="ChEBI" id="CHEBI:15378"/>
        <dbReference type="ChEBI" id="CHEBI:29999"/>
        <dbReference type="ChEBI" id="CHEBI:33019"/>
        <dbReference type="ChEBI" id="CHEBI:43474"/>
        <dbReference type="ChEBI" id="CHEBI:83421"/>
    </reaction>
</comment>
<comment type="cofactor">
    <cofactor evidence="1">
        <name>Mg(2+)</name>
        <dbReference type="ChEBI" id="CHEBI:18420"/>
    </cofactor>
</comment>
<comment type="subunit">
    <text evidence="1">Homohexamer.</text>
</comment>
<comment type="domain">
    <text evidence="1">The Walker A ATP-binding motif also binds Pi and PPi.</text>
</comment>
<comment type="miscellaneous">
    <text evidence="1">Both phosphorylation and phosphorolysis are carried out by the same active site and suggest a common mechanism for both reactions.</text>
</comment>
<comment type="similarity">
    <text evidence="1">Belongs to the HPrK/P family.</text>
</comment>
<accession>B4U3X7</accession>
<dbReference type="EC" id="2.7.11.-" evidence="1"/>
<dbReference type="EC" id="2.7.4.-" evidence="1"/>
<dbReference type="EMBL" id="CP001129">
    <property type="protein sequence ID" value="ACG62694.1"/>
    <property type="molecule type" value="Genomic_DNA"/>
</dbReference>
<dbReference type="RefSeq" id="WP_012515957.1">
    <property type="nucleotide sequence ID" value="NC_011134.1"/>
</dbReference>
<dbReference type="SMR" id="B4U3X7"/>
<dbReference type="GeneID" id="83705224"/>
<dbReference type="KEGG" id="sez:Sez_1358"/>
<dbReference type="HOGENOM" id="CLU_052030_0_1_9"/>
<dbReference type="Proteomes" id="UP000001873">
    <property type="component" value="Chromosome"/>
</dbReference>
<dbReference type="GO" id="GO:0005524">
    <property type="term" value="F:ATP binding"/>
    <property type="evidence" value="ECO:0007669"/>
    <property type="project" value="UniProtKB-UniRule"/>
</dbReference>
<dbReference type="GO" id="GO:0000287">
    <property type="term" value="F:magnesium ion binding"/>
    <property type="evidence" value="ECO:0007669"/>
    <property type="project" value="UniProtKB-UniRule"/>
</dbReference>
<dbReference type="GO" id="GO:0000155">
    <property type="term" value="F:phosphorelay sensor kinase activity"/>
    <property type="evidence" value="ECO:0007669"/>
    <property type="project" value="InterPro"/>
</dbReference>
<dbReference type="GO" id="GO:0004674">
    <property type="term" value="F:protein serine/threonine kinase activity"/>
    <property type="evidence" value="ECO:0007669"/>
    <property type="project" value="UniProtKB-KW"/>
</dbReference>
<dbReference type="GO" id="GO:0004712">
    <property type="term" value="F:protein serine/threonine/tyrosine kinase activity"/>
    <property type="evidence" value="ECO:0007669"/>
    <property type="project" value="UniProtKB-UniRule"/>
</dbReference>
<dbReference type="GO" id="GO:0006109">
    <property type="term" value="P:regulation of carbohydrate metabolic process"/>
    <property type="evidence" value="ECO:0007669"/>
    <property type="project" value="UniProtKB-UniRule"/>
</dbReference>
<dbReference type="CDD" id="cd01918">
    <property type="entry name" value="HprK_C"/>
    <property type="match status" value="1"/>
</dbReference>
<dbReference type="FunFam" id="3.40.50.300:FF:000174">
    <property type="entry name" value="HPr kinase/phosphorylase"/>
    <property type="match status" value="1"/>
</dbReference>
<dbReference type="Gene3D" id="3.40.1390.20">
    <property type="entry name" value="HprK N-terminal domain-like"/>
    <property type="match status" value="1"/>
</dbReference>
<dbReference type="Gene3D" id="3.40.50.300">
    <property type="entry name" value="P-loop containing nucleotide triphosphate hydrolases"/>
    <property type="match status" value="1"/>
</dbReference>
<dbReference type="HAMAP" id="MF_01249">
    <property type="entry name" value="HPr_kinase"/>
    <property type="match status" value="1"/>
</dbReference>
<dbReference type="InterPro" id="IPR003755">
    <property type="entry name" value="HPr(Ser)_kin/Pase"/>
</dbReference>
<dbReference type="InterPro" id="IPR011104">
    <property type="entry name" value="Hpr_kin/Pase_C"/>
</dbReference>
<dbReference type="InterPro" id="IPR011126">
    <property type="entry name" value="Hpr_kin/Pase_Hpr_N"/>
</dbReference>
<dbReference type="InterPro" id="IPR027417">
    <property type="entry name" value="P-loop_NTPase"/>
</dbReference>
<dbReference type="InterPro" id="IPR028979">
    <property type="entry name" value="Ser_kin/Pase_Hpr-like_N_sf"/>
</dbReference>
<dbReference type="NCBIfam" id="TIGR00679">
    <property type="entry name" value="hpr-ser"/>
    <property type="match status" value="1"/>
</dbReference>
<dbReference type="PANTHER" id="PTHR30305:SF1">
    <property type="entry name" value="HPR KINASE_PHOSPHORYLASE"/>
    <property type="match status" value="1"/>
</dbReference>
<dbReference type="PANTHER" id="PTHR30305">
    <property type="entry name" value="PROTEIN YJDM-RELATED"/>
    <property type="match status" value="1"/>
</dbReference>
<dbReference type="Pfam" id="PF07475">
    <property type="entry name" value="Hpr_kinase_C"/>
    <property type="match status" value="1"/>
</dbReference>
<dbReference type="Pfam" id="PF02603">
    <property type="entry name" value="Hpr_kinase_N"/>
    <property type="match status" value="1"/>
</dbReference>
<dbReference type="SUPFAM" id="SSF75138">
    <property type="entry name" value="HprK N-terminal domain-like"/>
    <property type="match status" value="1"/>
</dbReference>
<dbReference type="SUPFAM" id="SSF53795">
    <property type="entry name" value="PEP carboxykinase-like"/>
    <property type="match status" value="1"/>
</dbReference>